<keyword id="KW-0067">ATP-binding</keyword>
<keyword id="KW-1003">Cell membrane</keyword>
<keyword id="KW-0406">Ion transport</keyword>
<keyword id="KW-0408">Iron</keyword>
<keyword id="KW-0410">Iron transport</keyword>
<keyword id="KW-0472">Membrane</keyword>
<keyword id="KW-0547">Nucleotide-binding</keyword>
<keyword id="KW-1185">Reference proteome</keyword>
<keyword id="KW-1278">Translocase</keyword>
<keyword id="KW-0813">Transport</keyword>
<evidence type="ECO:0000255" key="1">
    <source>
        <dbReference type="PROSITE-ProRule" id="PRU00434"/>
    </source>
</evidence>
<evidence type="ECO:0000269" key="2">
    <source>
    </source>
</evidence>
<evidence type="ECO:0000303" key="3">
    <source>
    </source>
</evidence>
<evidence type="ECO:0000305" key="4"/>
<evidence type="ECO:0000305" key="5">
    <source>
    </source>
</evidence>
<evidence type="ECO:0000312" key="6">
    <source>
        <dbReference type="EMBL" id="AAT34460.1"/>
    </source>
</evidence>
<organism>
    <name type="scientific">Bacillus anthracis</name>
    <dbReference type="NCBI Taxonomy" id="1392"/>
    <lineage>
        <taxon>Bacteria</taxon>
        <taxon>Bacillati</taxon>
        <taxon>Bacillota</taxon>
        <taxon>Bacilli</taxon>
        <taxon>Bacillales</taxon>
        <taxon>Bacillaceae</taxon>
        <taxon>Bacillus</taxon>
        <taxon>Bacillus cereus group</taxon>
    </lineage>
</organism>
<sequence>MIKIDNVKKFYTDKVKIGPLDIEIPKAGFTSLIGPNGAGKSTTLLMIGRLLDMDEGQIQVANMDVSESKSKDLAKVLTILRQENHFVTRLTVRQLVGFGRFPYSKGRLTKEDEVIISKYIDFLDLTNLENRYLDELSGGQRQRAYVAMVLCQETEYVLLDEPLNNLDVARSVQMMEHLRRAANEFGRTILTVMHDINFAAKYSDKICAMKDGQIAAFGTVEEVMDSTLLTDIFETRIEIIKGPYGPIAVY</sequence>
<protein>
    <recommendedName>
        <fullName evidence="4">Petrobactin import ATP-binding protein FatE</fullName>
        <ecNumber evidence="5">7.2.2.-</ecNumber>
    </recommendedName>
</protein>
<proteinExistence type="evidence at protein level"/>
<reference key="1">
    <citation type="journal article" date="2009" name="J. Bacteriol.">
        <title>The complete genome sequence of Bacillus anthracis Ames 'Ancestor'.</title>
        <authorList>
            <person name="Ravel J."/>
            <person name="Jiang L."/>
            <person name="Stanley S.T."/>
            <person name="Wilson M.R."/>
            <person name="Decker R.S."/>
            <person name="Read T.D."/>
            <person name="Worsham P."/>
            <person name="Keim P.S."/>
            <person name="Salzberg S.L."/>
            <person name="Fraser-Liggett C.M."/>
            <person name="Rasko D.A."/>
        </authorList>
    </citation>
    <scope>NUCLEOTIDE SEQUENCE [LARGE SCALE GENOMIC DNA]</scope>
    <source>
        <strain>Ames ancestor</strain>
    </source>
</reference>
<reference key="2">
    <citation type="journal article" date="2012" name="Mol. Microbiol.">
        <title>Multiple ABC transporters are involved in the acquisition of petrobactin in Bacillus anthracis.</title>
        <authorList>
            <person name="Dixon S.D."/>
            <person name="Janes B.K."/>
            <person name="Bourgis A."/>
            <person name="Carlson P.E. Jr."/>
            <person name="Hanna P.C."/>
        </authorList>
    </citation>
    <scope>FUNCTION</scope>
    <scope>CATALYTIC ACTIVITY</scope>
    <scope>SUBUNIT</scope>
    <scope>SUBCELLULAR LOCATION</scope>
    <scope>DISRUPTION PHENOTYPE</scope>
    <source>
        <strain>Sterne</strain>
    </source>
</reference>
<feature type="chain" id="PRO_0000443817" description="Petrobactin import ATP-binding protein FatE">
    <location>
        <begin position="1"/>
        <end position="250"/>
    </location>
</feature>
<feature type="domain" description="ABC transporter" evidence="1">
    <location>
        <begin position="2"/>
        <end position="236"/>
    </location>
</feature>
<feature type="binding site" evidence="1">
    <location>
        <begin position="34"/>
        <end position="41"/>
    </location>
    <ligand>
        <name>ATP</name>
        <dbReference type="ChEBI" id="CHEBI:30616"/>
    </ligand>
</feature>
<dbReference type="EC" id="7.2.2.-" evidence="5"/>
<dbReference type="EMBL" id="AE017334">
    <property type="protein sequence ID" value="AAT34460.1"/>
    <property type="molecule type" value="Genomic_DNA"/>
</dbReference>
<dbReference type="RefSeq" id="WP_000590068.1">
    <property type="nucleotide sequence ID" value="NZ_WXXJ01000007.1"/>
</dbReference>
<dbReference type="SMR" id="Q81XB3"/>
<dbReference type="STRING" id="261594.GBAA_5327"/>
<dbReference type="DNASU" id="1084830"/>
<dbReference type="GeneID" id="45024934"/>
<dbReference type="KEGG" id="bar:GBAA_5327"/>
<dbReference type="PATRIC" id="fig|1392.230.peg.5245"/>
<dbReference type="HOGENOM" id="CLU_000604_1_11_9"/>
<dbReference type="OMA" id="YDMTIPI"/>
<dbReference type="OrthoDB" id="9787851at2"/>
<dbReference type="Proteomes" id="UP000000594">
    <property type="component" value="Chromosome"/>
</dbReference>
<dbReference type="GO" id="GO:0005886">
    <property type="term" value="C:plasma membrane"/>
    <property type="evidence" value="ECO:0007669"/>
    <property type="project" value="UniProtKB-SubCell"/>
</dbReference>
<dbReference type="GO" id="GO:0005524">
    <property type="term" value="F:ATP binding"/>
    <property type="evidence" value="ECO:0007669"/>
    <property type="project" value="UniProtKB-KW"/>
</dbReference>
<dbReference type="GO" id="GO:0016887">
    <property type="term" value="F:ATP hydrolysis activity"/>
    <property type="evidence" value="ECO:0007669"/>
    <property type="project" value="InterPro"/>
</dbReference>
<dbReference type="GO" id="GO:0006826">
    <property type="term" value="P:iron ion transport"/>
    <property type="evidence" value="ECO:0007669"/>
    <property type="project" value="UniProtKB-KW"/>
</dbReference>
<dbReference type="CDD" id="cd03214">
    <property type="entry name" value="ABC_Iron-Siderophores_B12_Hemin"/>
    <property type="match status" value="1"/>
</dbReference>
<dbReference type="FunFam" id="3.40.50.300:FF:000824">
    <property type="entry name" value="Iron ABC transporter ATP-binding protein"/>
    <property type="match status" value="1"/>
</dbReference>
<dbReference type="Gene3D" id="3.40.50.300">
    <property type="entry name" value="P-loop containing nucleotide triphosphate hydrolases"/>
    <property type="match status" value="1"/>
</dbReference>
<dbReference type="InterPro" id="IPR003593">
    <property type="entry name" value="AAA+_ATPase"/>
</dbReference>
<dbReference type="InterPro" id="IPR003439">
    <property type="entry name" value="ABC_transporter-like_ATP-bd"/>
</dbReference>
<dbReference type="InterPro" id="IPR027417">
    <property type="entry name" value="P-loop_NTPase"/>
</dbReference>
<dbReference type="InterPro" id="IPR051535">
    <property type="entry name" value="Siderophore_ABC-ATPase"/>
</dbReference>
<dbReference type="PANTHER" id="PTHR42771">
    <property type="entry name" value="IRON(3+)-HYDROXAMATE IMPORT ATP-BINDING PROTEIN FHUC"/>
    <property type="match status" value="1"/>
</dbReference>
<dbReference type="PANTHER" id="PTHR42771:SF3">
    <property type="entry name" value="PETROBACTIN IMPORT ATP-BINDING PROTEIN YCLP"/>
    <property type="match status" value="1"/>
</dbReference>
<dbReference type="Pfam" id="PF00005">
    <property type="entry name" value="ABC_tran"/>
    <property type="match status" value="1"/>
</dbReference>
<dbReference type="SMART" id="SM00382">
    <property type="entry name" value="AAA"/>
    <property type="match status" value="1"/>
</dbReference>
<dbReference type="SUPFAM" id="SSF52540">
    <property type="entry name" value="P-loop containing nucleoside triphosphate hydrolases"/>
    <property type="match status" value="1"/>
</dbReference>
<dbReference type="PROSITE" id="PS50893">
    <property type="entry name" value="ABC_TRANSPORTER_2"/>
    <property type="match status" value="1"/>
</dbReference>
<name>FATE_BACAN</name>
<accession>Q81XB3</accession>
<accession>E9RBZ6</accession>
<accession>E9RBZ7</accession>
<accession>Q6HR48</accession>
<accession>Q6KKG5</accession>
<comment type="function">
    <text evidence="2">Part of an ABC transporter complex involved in ferric-petrobactin uptake. Probably responsible for energy coupling to the transport system.</text>
</comment>
<comment type="catalytic activity">
    <reaction evidence="5">
        <text>a Fe(III)-siderophore(out) + ATP + H2O = a Fe(III)-siderophore(in) + ADP + phosphate + H(+)</text>
        <dbReference type="Rhea" id="RHEA:15597"/>
        <dbReference type="Rhea" id="RHEA-COMP:11342"/>
        <dbReference type="ChEBI" id="CHEBI:15377"/>
        <dbReference type="ChEBI" id="CHEBI:15378"/>
        <dbReference type="ChEBI" id="CHEBI:29034"/>
        <dbReference type="ChEBI" id="CHEBI:30616"/>
        <dbReference type="ChEBI" id="CHEBI:43474"/>
        <dbReference type="ChEBI" id="CHEBI:456216"/>
    </reaction>
</comment>
<comment type="subunit">
    <text evidence="5">The complex is composed of two ATP-binding proteins (FatE), two transmembrane proteins (FatC and FatD) and a solute-binding protein (FpuA).</text>
</comment>
<comment type="subcellular location">
    <subcellularLocation>
        <location evidence="5">Cell membrane</location>
        <topology evidence="5">Peripheral membrane protein</topology>
        <orientation evidence="5">Cytoplasmic side</orientation>
    </subcellularLocation>
</comment>
<comment type="disruption phenotype">
    <text evidence="2">A mutant lacking fatE, fpuC and fpuD ATPases is deficient in petrobactin import in iron-depleted conditions.</text>
</comment>
<comment type="similarity">
    <text evidence="4">Belongs to the ABC transporter superfamily.</text>
</comment>
<gene>
    <name evidence="3" type="primary">fatE</name>
    <name evidence="6" type="ordered locus">GBAA_5327</name>
</gene>